<gene>
    <name evidence="2" type="primary">rpsL</name>
    <name type="ordered locus">gbs1814</name>
</gene>
<sequence>MPTINQLVRKPRKSKVEKSDSPALNIGYNSHRKVHTKLSAPQKRGVATRVGTMTPKKPNSALRKFARVRLSNLIEVTAYIPGIGHNLQEHSVVLIRGGRVKDLPGVRYHIVRGALDTAGVADRKQGRSKYGAKRPKG</sequence>
<comment type="function">
    <text evidence="2">With S4 and S5 plays an important role in translational accuracy.</text>
</comment>
<comment type="function">
    <text evidence="2">Interacts with and stabilizes bases of the 16S rRNA that are involved in tRNA selection in the A site and with the mRNA backbone. Located at the interface of the 30S and 50S subunits, it traverses the body of the 30S subunit contacting proteins on the other side and probably holding the rRNA structure together. The combined cluster of proteins S8, S12 and S17 appears to hold together the shoulder and platform of the 30S subunit.</text>
</comment>
<comment type="subunit">
    <text evidence="2">Part of the 30S ribosomal subunit. Contacts proteins S8 and S17. May interact with IF1 in the 30S initiation complex.</text>
</comment>
<comment type="similarity">
    <text evidence="2">Belongs to the universal ribosomal protein uS12 family.</text>
</comment>
<organism>
    <name type="scientific">Streptococcus agalactiae serotype III (strain NEM316)</name>
    <dbReference type="NCBI Taxonomy" id="211110"/>
    <lineage>
        <taxon>Bacteria</taxon>
        <taxon>Bacillati</taxon>
        <taxon>Bacillota</taxon>
        <taxon>Bacilli</taxon>
        <taxon>Lactobacillales</taxon>
        <taxon>Streptococcaceae</taxon>
        <taxon>Streptococcus</taxon>
    </lineage>
</organism>
<accession>Q8E3E5</accession>
<protein>
    <recommendedName>
        <fullName evidence="2">Small ribosomal subunit protein uS12</fullName>
    </recommendedName>
    <alternativeName>
        <fullName evidence="4">30S ribosomal protein S12</fullName>
    </alternativeName>
</protein>
<feature type="chain" id="PRO_0000146317" description="Small ribosomal subunit protein uS12">
    <location>
        <begin position="1"/>
        <end position="137"/>
    </location>
</feature>
<feature type="region of interest" description="Disordered" evidence="3">
    <location>
        <begin position="1"/>
        <end position="21"/>
    </location>
</feature>
<feature type="region of interest" description="Disordered" evidence="3">
    <location>
        <begin position="36"/>
        <end position="57"/>
    </location>
</feature>
<feature type="modified residue" description="3-methylthioaspartic acid" evidence="1">
    <location>
        <position position="102"/>
    </location>
</feature>
<name>RS12_STRA3</name>
<reference key="1">
    <citation type="journal article" date="2002" name="Mol. Microbiol.">
        <title>Genome sequence of Streptococcus agalactiae, a pathogen causing invasive neonatal disease.</title>
        <authorList>
            <person name="Glaser P."/>
            <person name="Rusniok C."/>
            <person name="Buchrieser C."/>
            <person name="Chevalier F."/>
            <person name="Frangeul L."/>
            <person name="Msadek T."/>
            <person name="Zouine M."/>
            <person name="Couve E."/>
            <person name="Lalioui L."/>
            <person name="Poyart C."/>
            <person name="Trieu-Cuot P."/>
            <person name="Kunst F."/>
        </authorList>
    </citation>
    <scope>NUCLEOTIDE SEQUENCE [LARGE SCALE GENOMIC DNA]</scope>
    <source>
        <strain>NEM316</strain>
    </source>
</reference>
<proteinExistence type="inferred from homology"/>
<keyword id="KW-0488">Methylation</keyword>
<keyword id="KW-0687">Ribonucleoprotein</keyword>
<keyword id="KW-0689">Ribosomal protein</keyword>
<keyword id="KW-0694">RNA-binding</keyword>
<keyword id="KW-0699">rRNA-binding</keyword>
<keyword id="KW-0820">tRNA-binding</keyword>
<dbReference type="EMBL" id="AL766853">
    <property type="protein sequence ID" value="CAD47473.1"/>
    <property type="molecule type" value="Genomic_DNA"/>
</dbReference>
<dbReference type="RefSeq" id="WP_001142328.1">
    <property type="nucleotide sequence ID" value="NC_004368.1"/>
</dbReference>
<dbReference type="SMR" id="Q8E3E5"/>
<dbReference type="GeneID" id="66886609"/>
<dbReference type="KEGG" id="san:rpsL"/>
<dbReference type="eggNOG" id="COG0048">
    <property type="taxonomic scope" value="Bacteria"/>
</dbReference>
<dbReference type="HOGENOM" id="CLU_104295_1_2_9"/>
<dbReference type="Proteomes" id="UP000000823">
    <property type="component" value="Chromosome"/>
</dbReference>
<dbReference type="GO" id="GO:0015935">
    <property type="term" value="C:small ribosomal subunit"/>
    <property type="evidence" value="ECO:0007669"/>
    <property type="project" value="InterPro"/>
</dbReference>
<dbReference type="GO" id="GO:0019843">
    <property type="term" value="F:rRNA binding"/>
    <property type="evidence" value="ECO:0007669"/>
    <property type="project" value="UniProtKB-UniRule"/>
</dbReference>
<dbReference type="GO" id="GO:0003735">
    <property type="term" value="F:structural constituent of ribosome"/>
    <property type="evidence" value="ECO:0007669"/>
    <property type="project" value="InterPro"/>
</dbReference>
<dbReference type="GO" id="GO:0000049">
    <property type="term" value="F:tRNA binding"/>
    <property type="evidence" value="ECO:0007669"/>
    <property type="project" value="UniProtKB-UniRule"/>
</dbReference>
<dbReference type="GO" id="GO:0006412">
    <property type="term" value="P:translation"/>
    <property type="evidence" value="ECO:0007669"/>
    <property type="project" value="UniProtKB-UniRule"/>
</dbReference>
<dbReference type="CDD" id="cd03368">
    <property type="entry name" value="Ribosomal_S12"/>
    <property type="match status" value="1"/>
</dbReference>
<dbReference type="FunFam" id="2.40.50.140:FF:000001">
    <property type="entry name" value="30S ribosomal protein S12"/>
    <property type="match status" value="1"/>
</dbReference>
<dbReference type="Gene3D" id="2.40.50.140">
    <property type="entry name" value="Nucleic acid-binding proteins"/>
    <property type="match status" value="1"/>
</dbReference>
<dbReference type="HAMAP" id="MF_00403_B">
    <property type="entry name" value="Ribosomal_uS12_B"/>
    <property type="match status" value="1"/>
</dbReference>
<dbReference type="InterPro" id="IPR012340">
    <property type="entry name" value="NA-bd_OB-fold"/>
</dbReference>
<dbReference type="InterPro" id="IPR006032">
    <property type="entry name" value="Ribosomal_uS12"/>
</dbReference>
<dbReference type="InterPro" id="IPR005679">
    <property type="entry name" value="Ribosomal_uS12_bac"/>
</dbReference>
<dbReference type="NCBIfam" id="TIGR00981">
    <property type="entry name" value="rpsL_bact"/>
    <property type="match status" value="1"/>
</dbReference>
<dbReference type="PANTHER" id="PTHR11652">
    <property type="entry name" value="30S RIBOSOMAL PROTEIN S12 FAMILY MEMBER"/>
    <property type="match status" value="1"/>
</dbReference>
<dbReference type="Pfam" id="PF00164">
    <property type="entry name" value="Ribosom_S12_S23"/>
    <property type="match status" value="1"/>
</dbReference>
<dbReference type="PIRSF" id="PIRSF002133">
    <property type="entry name" value="Ribosomal_S12/S23"/>
    <property type="match status" value="1"/>
</dbReference>
<dbReference type="PRINTS" id="PR01034">
    <property type="entry name" value="RIBOSOMALS12"/>
</dbReference>
<dbReference type="SUPFAM" id="SSF50249">
    <property type="entry name" value="Nucleic acid-binding proteins"/>
    <property type="match status" value="1"/>
</dbReference>
<dbReference type="PROSITE" id="PS00055">
    <property type="entry name" value="RIBOSOMAL_S12"/>
    <property type="match status" value="1"/>
</dbReference>
<evidence type="ECO:0000250" key="1"/>
<evidence type="ECO:0000255" key="2">
    <source>
        <dbReference type="HAMAP-Rule" id="MF_00403"/>
    </source>
</evidence>
<evidence type="ECO:0000256" key="3">
    <source>
        <dbReference type="SAM" id="MobiDB-lite"/>
    </source>
</evidence>
<evidence type="ECO:0000305" key="4"/>